<gene>
    <name type="ordered locus">YPTB2234</name>
</gene>
<sequence>MINKTLLGLSLGALMFTAGSAVAADYKIDKEGQHAFIEFRIKHLGYSWLYGSFNDFDGSFTFDDKNPAADKVNVVINTNSVDTNHAERDKHLRGKSFLNVAKFPQATFESTEVKKNGDGYSVIGNLTLNGVTKPVTLESKLTGQGNDPWGGYRAGFEANGNIKLKDFNITTDLGPASQEVELILSVEGVQVK</sequence>
<protein>
    <recommendedName>
        <fullName evidence="1">UPF0312 protein YPTB2234</fullName>
    </recommendedName>
</protein>
<evidence type="ECO:0000255" key="1">
    <source>
        <dbReference type="HAMAP-Rule" id="MF_00780"/>
    </source>
</evidence>
<feature type="signal peptide" evidence="1">
    <location>
        <begin position="1"/>
        <end position="23"/>
    </location>
</feature>
<feature type="chain" id="PRO_0000226328" description="UPF0312 protein YPTB2234">
    <location>
        <begin position="24"/>
        <end position="192"/>
    </location>
</feature>
<organism>
    <name type="scientific">Yersinia pseudotuberculosis serotype I (strain IP32953)</name>
    <dbReference type="NCBI Taxonomy" id="273123"/>
    <lineage>
        <taxon>Bacteria</taxon>
        <taxon>Pseudomonadati</taxon>
        <taxon>Pseudomonadota</taxon>
        <taxon>Gammaproteobacteria</taxon>
        <taxon>Enterobacterales</taxon>
        <taxon>Yersiniaceae</taxon>
        <taxon>Yersinia</taxon>
    </lineage>
</organism>
<name>Y2234_YERPS</name>
<proteinExistence type="inferred from homology"/>
<reference key="1">
    <citation type="journal article" date="2004" name="Proc. Natl. Acad. Sci. U.S.A.">
        <title>Insights into the evolution of Yersinia pestis through whole-genome comparison with Yersinia pseudotuberculosis.</title>
        <authorList>
            <person name="Chain P.S.G."/>
            <person name="Carniel E."/>
            <person name="Larimer F.W."/>
            <person name="Lamerdin J."/>
            <person name="Stoutland P.O."/>
            <person name="Regala W.M."/>
            <person name="Georgescu A.M."/>
            <person name="Vergez L.M."/>
            <person name="Land M.L."/>
            <person name="Motin V.L."/>
            <person name="Brubaker R.R."/>
            <person name="Fowler J."/>
            <person name="Hinnebusch J."/>
            <person name="Marceau M."/>
            <person name="Medigue C."/>
            <person name="Simonet M."/>
            <person name="Chenal-Francisque V."/>
            <person name="Souza B."/>
            <person name="Dacheux D."/>
            <person name="Elliott J.M."/>
            <person name="Derbise A."/>
            <person name="Hauser L.J."/>
            <person name="Garcia E."/>
        </authorList>
    </citation>
    <scope>NUCLEOTIDE SEQUENCE [LARGE SCALE GENOMIC DNA]</scope>
    <source>
        <strain>IP32953</strain>
    </source>
</reference>
<dbReference type="EMBL" id="BX936398">
    <property type="protein sequence ID" value="CAH21472.1"/>
    <property type="molecule type" value="Genomic_DNA"/>
</dbReference>
<dbReference type="RefSeq" id="WP_002211011.1">
    <property type="nucleotide sequence ID" value="NZ_CP009712.1"/>
</dbReference>
<dbReference type="SMR" id="Q66A98"/>
<dbReference type="KEGG" id="ypo:BZ17_227"/>
<dbReference type="KEGG" id="yps:YPTB2234"/>
<dbReference type="PATRIC" id="fig|273123.14.peg.235"/>
<dbReference type="Proteomes" id="UP000001011">
    <property type="component" value="Chromosome"/>
</dbReference>
<dbReference type="GO" id="GO:0042597">
    <property type="term" value="C:periplasmic space"/>
    <property type="evidence" value="ECO:0007669"/>
    <property type="project" value="UniProtKB-SubCell"/>
</dbReference>
<dbReference type="Gene3D" id="2.40.128.110">
    <property type="entry name" value="Lipid/polyisoprenoid-binding, YceI-like"/>
    <property type="match status" value="1"/>
</dbReference>
<dbReference type="HAMAP" id="MF_00780">
    <property type="entry name" value="UPF0312"/>
    <property type="match status" value="1"/>
</dbReference>
<dbReference type="InterPro" id="IPR007372">
    <property type="entry name" value="Lipid/polyisoprenoid-bd_YceI"/>
</dbReference>
<dbReference type="InterPro" id="IPR036761">
    <property type="entry name" value="TTHA0802/YceI-like_sf"/>
</dbReference>
<dbReference type="InterPro" id="IPR023480">
    <property type="entry name" value="UPF0312/YceI"/>
</dbReference>
<dbReference type="NCBIfam" id="NF002994">
    <property type="entry name" value="PRK03757.1"/>
    <property type="match status" value="1"/>
</dbReference>
<dbReference type="PANTHER" id="PTHR34406">
    <property type="entry name" value="PROTEIN YCEI"/>
    <property type="match status" value="1"/>
</dbReference>
<dbReference type="PANTHER" id="PTHR34406:SF1">
    <property type="entry name" value="PROTEIN YCEI"/>
    <property type="match status" value="1"/>
</dbReference>
<dbReference type="Pfam" id="PF04264">
    <property type="entry name" value="YceI"/>
    <property type="match status" value="1"/>
</dbReference>
<dbReference type="SMART" id="SM00867">
    <property type="entry name" value="YceI"/>
    <property type="match status" value="1"/>
</dbReference>
<dbReference type="SUPFAM" id="SSF101874">
    <property type="entry name" value="YceI-like"/>
    <property type="match status" value="1"/>
</dbReference>
<comment type="subcellular location">
    <subcellularLocation>
        <location evidence="1">Periplasm</location>
    </subcellularLocation>
</comment>
<comment type="similarity">
    <text evidence="1">Belongs to the UPF0312 family. Type 1 subfamily.</text>
</comment>
<keyword id="KW-0574">Periplasm</keyword>
<keyword id="KW-0732">Signal</keyword>
<accession>Q66A98</accession>